<accession>P34090</accession>
<accession>Q553Y6</accession>
<accession>Q869Y2</accession>
<reference key="1">
    <citation type="journal article" date="2002" name="Nature">
        <title>Sequence and analysis of chromosome 2 of Dictyostelium discoideum.</title>
        <authorList>
            <person name="Gloeckner G."/>
            <person name="Eichinger L."/>
            <person name="Szafranski K."/>
            <person name="Pachebat J.A."/>
            <person name="Bankier A.T."/>
            <person name="Dear P.H."/>
            <person name="Lehmann R."/>
            <person name="Baumgart C."/>
            <person name="Parra G."/>
            <person name="Abril J.F."/>
            <person name="Guigo R."/>
            <person name="Kumpf K."/>
            <person name="Tunggal B."/>
            <person name="Cox E.C."/>
            <person name="Quail M.A."/>
            <person name="Platzer M."/>
            <person name="Rosenthal A."/>
            <person name="Noegel A.A."/>
        </authorList>
    </citation>
    <scope>NUCLEOTIDE SEQUENCE [LARGE SCALE GENOMIC DNA]</scope>
    <source>
        <strain>AX4</strain>
    </source>
</reference>
<reference key="2">
    <citation type="journal article" date="2005" name="Nature">
        <title>The genome of the social amoeba Dictyostelium discoideum.</title>
        <authorList>
            <person name="Eichinger L."/>
            <person name="Pachebat J.A."/>
            <person name="Gloeckner G."/>
            <person name="Rajandream M.A."/>
            <person name="Sucgang R."/>
            <person name="Berriman M."/>
            <person name="Song J."/>
            <person name="Olsen R."/>
            <person name="Szafranski K."/>
            <person name="Xu Q."/>
            <person name="Tunggal B."/>
            <person name="Kummerfeld S."/>
            <person name="Madera M."/>
            <person name="Konfortov B.A."/>
            <person name="Rivero F."/>
            <person name="Bankier A.T."/>
            <person name="Lehmann R."/>
            <person name="Hamlin N."/>
            <person name="Davies R."/>
            <person name="Gaudet P."/>
            <person name="Fey P."/>
            <person name="Pilcher K."/>
            <person name="Chen G."/>
            <person name="Saunders D."/>
            <person name="Sodergren E.J."/>
            <person name="Davis P."/>
            <person name="Kerhornou A."/>
            <person name="Nie X."/>
            <person name="Hall N."/>
            <person name="Anjard C."/>
            <person name="Hemphill L."/>
            <person name="Bason N."/>
            <person name="Farbrother P."/>
            <person name="Desany B."/>
            <person name="Just E."/>
            <person name="Morio T."/>
            <person name="Rost R."/>
            <person name="Churcher C.M."/>
            <person name="Cooper J."/>
            <person name="Haydock S."/>
            <person name="van Driessche N."/>
            <person name="Cronin A."/>
            <person name="Goodhead I."/>
            <person name="Muzny D.M."/>
            <person name="Mourier T."/>
            <person name="Pain A."/>
            <person name="Lu M."/>
            <person name="Harper D."/>
            <person name="Lindsay R."/>
            <person name="Hauser H."/>
            <person name="James K.D."/>
            <person name="Quiles M."/>
            <person name="Madan Babu M."/>
            <person name="Saito T."/>
            <person name="Buchrieser C."/>
            <person name="Wardroper A."/>
            <person name="Felder M."/>
            <person name="Thangavelu M."/>
            <person name="Johnson D."/>
            <person name="Knights A."/>
            <person name="Loulseged H."/>
            <person name="Mungall K.L."/>
            <person name="Oliver K."/>
            <person name="Price C."/>
            <person name="Quail M.A."/>
            <person name="Urushihara H."/>
            <person name="Hernandez J."/>
            <person name="Rabbinowitsch E."/>
            <person name="Steffen D."/>
            <person name="Sanders M."/>
            <person name="Ma J."/>
            <person name="Kohara Y."/>
            <person name="Sharp S."/>
            <person name="Simmonds M.N."/>
            <person name="Spiegler S."/>
            <person name="Tivey A."/>
            <person name="Sugano S."/>
            <person name="White B."/>
            <person name="Walker D."/>
            <person name="Woodward J.R."/>
            <person name="Winckler T."/>
            <person name="Tanaka Y."/>
            <person name="Shaulsky G."/>
            <person name="Schleicher M."/>
            <person name="Weinstock G.M."/>
            <person name="Rosenthal A."/>
            <person name="Cox E.C."/>
            <person name="Chisholm R.L."/>
            <person name="Gibbs R.A."/>
            <person name="Loomis W.F."/>
            <person name="Platzer M."/>
            <person name="Kay R.R."/>
            <person name="Williams J.G."/>
            <person name="Dear P.H."/>
            <person name="Noegel A.A."/>
            <person name="Barrell B.G."/>
            <person name="Kuspa A."/>
        </authorList>
    </citation>
    <scope>NUCLEOTIDE SEQUENCE [LARGE SCALE GENOMIC DNA]</scope>
    <source>
        <strain>AX4</strain>
    </source>
</reference>
<reference key="3">
    <citation type="journal article" date="1992" name="Genes Dev.">
        <title>A density-sensing factor controls development in Dictyostelium.</title>
        <authorList>
            <person name="Jain R."/>
            <person name="Yuen I.S."/>
            <person name="Taphouse C.R."/>
            <person name="Gomer R.H."/>
        </authorList>
    </citation>
    <scope>NUCLEOTIDE SEQUENCE [MRNA] OF 58-699</scope>
    <scope>PROTEIN SEQUENCE OF 406-438; 448-460 AND 692-698</scope>
    <source>
        <strain>AX4</strain>
    </source>
</reference>
<gene>
    <name type="primary">cmfA</name>
    <name type="ORF">DDB_G0275007</name>
</gene>
<name>CMF_DICDI</name>
<feature type="signal peptide" evidence="1">
    <location>
        <begin position="1"/>
        <end position="18"/>
    </location>
</feature>
<feature type="chain" id="PRO_0000089883" description="Conditioned medium factor">
    <location>
        <begin position="19"/>
        <end position="699"/>
    </location>
</feature>
<feature type="region of interest" description="Disordered" evidence="2">
    <location>
        <begin position="680"/>
        <end position="699"/>
    </location>
</feature>
<feature type="glycosylation site" description="N-linked (GlcNAc...) asparagine" evidence="1">
    <location>
        <position position="130"/>
    </location>
</feature>
<feature type="glycosylation site" description="N-linked (GlcNAc...) asparagine" evidence="1">
    <location>
        <position position="283"/>
    </location>
</feature>
<feature type="glycosylation site" description="N-linked (GlcNAc...) asparagine" evidence="1">
    <location>
        <position position="346"/>
    </location>
</feature>
<feature type="glycosylation site" description="N-linked (GlcNAc...) asparagine" evidence="1">
    <location>
        <position position="430"/>
    </location>
</feature>
<feature type="sequence conflict" description="In Ref. 3; CAA77749." evidence="3" ref="3">
    <original>N</original>
    <variation>M</variation>
    <location>
        <position position="130"/>
    </location>
</feature>
<feature type="sequence conflict" description="In Ref. 3; CAA77749." evidence="3" ref="3">
    <original>S</original>
    <variation>T</variation>
    <location>
        <position position="162"/>
    </location>
</feature>
<feature type="sequence conflict" description="In Ref. 3; CAA77749." evidence="3" ref="3">
    <original>Y</original>
    <variation>H</variation>
    <location>
        <position position="290"/>
    </location>
</feature>
<feature type="sequence conflict" description="In Ref. 3; CAA77749." evidence="3" ref="3">
    <original>YT</original>
    <variation>LS</variation>
    <location>
        <begin position="623"/>
        <end position="624"/>
    </location>
</feature>
<feature type="sequence conflict" description="In Ref. 3; CAA77749." evidence="3" ref="3">
    <original>W</original>
    <variation>C</variation>
    <location>
        <position position="699"/>
    </location>
</feature>
<comment type="function">
    <text>Involved in cell density sensing and might synchronize the onset of development by triggering aggregation when a majority of the cells in a given area have starved.</text>
</comment>
<comment type="PTM">
    <text>N- and O-glycosylated.</text>
</comment>
<comment type="PTM">
    <text>The N-terminus is blocked.</text>
</comment>
<comment type="sequence caution" evidence="3">
    <conflict type="erroneous initiation">
        <sequence resource="EMBL-CDS" id="CAA77749"/>
    </conflict>
    <text>Truncated N-terminus.</text>
</comment>
<comment type="sequence caution" evidence="3">
    <conflict type="frameshift">
        <sequence resource="EMBL-CDS" id="CAA77749"/>
    </conflict>
</comment>
<evidence type="ECO:0000255" key="1"/>
<evidence type="ECO:0000256" key="2">
    <source>
        <dbReference type="SAM" id="MobiDB-lite"/>
    </source>
</evidence>
<evidence type="ECO:0000305" key="3"/>
<sequence>MRLLLLLILIITINFSYGVLTPKNLAGEASEFGSFNIPNPMDVAQSSDSSLFGISMTQSQLKNSFEWSGVVPVDSEEEFTLTFFSSFPLSEFKVEASPKTSLSSSKSESEHKSKFYKVIKSIYQTPTVTNGSFGIDGATTPSFSLTWDKPVVGDWNVVITASSSLRKNEKFQKMVEDSTPQLLMLVQNPSDTHIYSYVSSYNNLFTGQKVSVLAMLHKKSEFIKKSSANRPLNWKPSPILLSDVSAEMILGLPDGSKETIPMFDDGLHDDEQANDGLFGGYINVSELGNYDLQVVYKGSQNGNGVIRSNQHLIPITSQYLELTGEVQSVQDGDANLNIYFIVNSPNQTTVDQTPVHVYSEVYGTDDDGKKVAIAWVAGVTSAQPIQGSTTTFALSAVLNERWIAKVGATAPFFVKNVQVSDLDTFIPLSNTTSTSNVKMVGEYKDVRTIVHSPPLHEITKEMRDGKMPKELADRIGKSTGNGKLILTHGYCSEGVWPIEDFENSVEFQDFNQNRGNDEFAQILANFGSQYTDGFSLVAHSQGGNAALHLVTFYFSGLDLSQKLEGRVIQSMGTPYQGTALAGTWASIGSAVGVGCSANDDLTVDGAALWLKSIPADKRALVYYTTTQYSTGSLINYCNLASNAVLEWPNDGVVDNEHTPLEGGVYLNNFKDWCHSDGMHSPQQTTNTEYNKEMSSNSVW</sequence>
<keyword id="KW-0903">Direct protein sequencing</keyword>
<keyword id="KW-0325">Glycoprotein</keyword>
<keyword id="KW-1185">Reference proteome</keyword>
<keyword id="KW-0732">Signal</keyword>
<protein>
    <recommendedName>
        <fullName>Conditioned medium factor</fullName>
        <shortName>CMF</shortName>
    </recommendedName>
    <alternativeName>
        <fullName>Density-sensing factor</fullName>
    </alternativeName>
</protein>
<proteinExistence type="evidence at protein level"/>
<dbReference type="EMBL" id="AAFI02000013">
    <property type="protein sequence ID" value="EAL69784.1"/>
    <property type="molecule type" value="Genomic_DNA"/>
</dbReference>
<dbReference type="EMBL" id="Z11691">
    <property type="protein sequence ID" value="CAA77749.1"/>
    <property type="status" value="ALT_SEQ"/>
    <property type="molecule type" value="mRNA"/>
</dbReference>
<dbReference type="PIR" id="A42138">
    <property type="entry name" value="A42138"/>
</dbReference>
<dbReference type="PIR" id="S24482">
    <property type="entry name" value="S24482"/>
</dbReference>
<dbReference type="RefSeq" id="XP_643825.1">
    <property type="nucleotide sequence ID" value="XM_638733.1"/>
</dbReference>
<dbReference type="FunCoup" id="P34090">
    <property type="interactions" value="4"/>
</dbReference>
<dbReference type="STRING" id="44689.P34090"/>
<dbReference type="GlyCosmos" id="P34090">
    <property type="glycosylation" value="4 sites, No reported glycans"/>
</dbReference>
<dbReference type="GlyGen" id="P34090">
    <property type="glycosylation" value="4 sites"/>
</dbReference>
<dbReference type="PaxDb" id="44689-DDB0191097"/>
<dbReference type="ABCD" id="P34090">
    <property type="antibodies" value="10 sequenced antibodies"/>
</dbReference>
<dbReference type="EnsemblProtists" id="EAL69784">
    <property type="protein sequence ID" value="EAL69784"/>
    <property type="gene ID" value="DDB_G0275007"/>
</dbReference>
<dbReference type="GeneID" id="8619872"/>
<dbReference type="KEGG" id="ddi:DDB_G0275007"/>
<dbReference type="dictyBase" id="DDB_G0275007">
    <property type="gene designation" value="cmfA"/>
</dbReference>
<dbReference type="VEuPathDB" id="AmoebaDB:DDB_G0275007"/>
<dbReference type="eggNOG" id="ENOG502RYH8">
    <property type="taxonomic scope" value="Eukaryota"/>
</dbReference>
<dbReference type="HOGENOM" id="CLU_413280_0_0_1"/>
<dbReference type="InParanoid" id="P34090"/>
<dbReference type="OMA" id="KWLSKAN"/>
<dbReference type="PRO" id="PR:P34090"/>
<dbReference type="Proteomes" id="UP000002195">
    <property type="component" value="Chromosome 2"/>
</dbReference>
<dbReference type="GO" id="GO:0005615">
    <property type="term" value="C:extracellular space"/>
    <property type="evidence" value="ECO:0000314"/>
    <property type="project" value="dictyBase"/>
</dbReference>
<dbReference type="GO" id="GO:0031152">
    <property type="term" value="P:aggregation involved in sorocarp development"/>
    <property type="evidence" value="ECO:0000315"/>
    <property type="project" value="dictyBase"/>
</dbReference>
<dbReference type="GO" id="GO:0045597">
    <property type="term" value="P:positive regulation of cell differentiation"/>
    <property type="evidence" value="ECO:0000314"/>
    <property type="project" value="dictyBase"/>
</dbReference>
<dbReference type="GO" id="GO:0010468">
    <property type="term" value="P:regulation of gene expression"/>
    <property type="evidence" value="ECO:0000314"/>
    <property type="project" value="dictyBase"/>
</dbReference>
<dbReference type="Gene3D" id="3.40.50.1820">
    <property type="entry name" value="alpha/beta hydrolase"/>
    <property type="match status" value="1"/>
</dbReference>
<dbReference type="InterPro" id="IPR029058">
    <property type="entry name" value="AB_hydrolase_fold"/>
</dbReference>
<dbReference type="NCBIfam" id="NF041940">
    <property type="entry name" value="choice_anch_X"/>
    <property type="match status" value="1"/>
</dbReference>
<organism>
    <name type="scientific">Dictyostelium discoideum</name>
    <name type="common">Social amoeba</name>
    <dbReference type="NCBI Taxonomy" id="44689"/>
    <lineage>
        <taxon>Eukaryota</taxon>
        <taxon>Amoebozoa</taxon>
        <taxon>Evosea</taxon>
        <taxon>Eumycetozoa</taxon>
        <taxon>Dictyostelia</taxon>
        <taxon>Dictyosteliales</taxon>
        <taxon>Dictyosteliaceae</taxon>
        <taxon>Dictyostelium</taxon>
    </lineage>
</organism>